<name>O167_CONAE</name>
<dbReference type="EMBL" id="AF215049">
    <property type="protein sequence ID" value="AAG60477.1"/>
    <property type="molecule type" value="mRNA"/>
</dbReference>
<dbReference type="SMR" id="Q9BP89"/>
<dbReference type="ConoServer" id="736">
    <property type="toxin name" value="Ar6.7 precursor"/>
</dbReference>
<dbReference type="GO" id="GO:0005576">
    <property type="term" value="C:extracellular region"/>
    <property type="evidence" value="ECO:0007669"/>
    <property type="project" value="UniProtKB-SubCell"/>
</dbReference>
<dbReference type="GO" id="GO:0008200">
    <property type="term" value="F:ion channel inhibitor activity"/>
    <property type="evidence" value="ECO:0007669"/>
    <property type="project" value="InterPro"/>
</dbReference>
<dbReference type="GO" id="GO:0090729">
    <property type="term" value="F:toxin activity"/>
    <property type="evidence" value="ECO:0007669"/>
    <property type="project" value="UniProtKB-KW"/>
</dbReference>
<dbReference type="InterPro" id="IPR004214">
    <property type="entry name" value="Conotoxin"/>
</dbReference>
<dbReference type="Pfam" id="PF02950">
    <property type="entry name" value="Conotoxin"/>
    <property type="match status" value="1"/>
</dbReference>
<organism>
    <name type="scientific">Conus arenatus</name>
    <name type="common">Sand-dusted cone</name>
    <dbReference type="NCBI Taxonomy" id="89451"/>
    <lineage>
        <taxon>Eukaryota</taxon>
        <taxon>Metazoa</taxon>
        <taxon>Spiralia</taxon>
        <taxon>Lophotrochozoa</taxon>
        <taxon>Mollusca</taxon>
        <taxon>Gastropoda</taxon>
        <taxon>Caenogastropoda</taxon>
        <taxon>Neogastropoda</taxon>
        <taxon>Conoidea</taxon>
        <taxon>Conidae</taxon>
        <taxon>Conus</taxon>
    </lineage>
</organism>
<reference key="1">
    <citation type="journal article" date="2001" name="Mol. Biol. Evol.">
        <title>Mechanisms for evolving hypervariability: the case of conopeptides.</title>
        <authorList>
            <person name="Conticello S.G."/>
            <person name="Gilad Y."/>
            <person name="Avidan N."/>
            <person name="Ben-Asher E."/>
            <person name="Levy Z."/>
            <person name="Fainzilber M."/>
        </authorList>
    </citation>
    <scope>NUCLEOTIDE SEQUENCE [MRNA]</scope>
    <source>
        <tissue>Venom duct</tissue>
    </source>
</reference>
<protein>
    <recommendedName>
        <fullName>Conotoxin ArMKLT2-041</fullName>
    </recommendedName>
</protein>
<evidence type="ECO:0000250" key="1"/>
<evidence type="ECO:0000255" key="2"/>
<evidence type="ECO:0000305" key="3"/>
<accession>Q9BP89</accession>
<proteinExistence type="evidence at transcript level"/>
<keyword id="KW-0165">Cleavage on pair of basic residues</keyword>
<keyword id="KW-1015">Disulfide bond</keyword>
<keyword id="KW-0960">Knottin</keyword>
<keyword id="KW-0528">Neurotoxin</keyword>
<keyword id="KW-0873">Pyrrolidone carboxylic acid</keyword>
<keyword id="KW-0964">Secreted</keyword>
<keyword id="KW-0732">Signal</keyword>
<keyword id="KW-0800">Toxin</keyword>
<feature type="signal peptide" evidence="2">
    <location>
        <begin position="1"/>
        <end position="22"/>
    </location>
</feature>
<feature type="propeptide" id="PRO_0000404776" evidence="1">
    <location>
        <begin position="23"/>
        <end position="46"/>
    </location>
</feature>
<feature type="peptide" id="PRO_0000404777" description="Conotoxin ArMKLT2-041">
    <location>
        <begin position="49"/>
        <end position="74"/>
    </location>
</feature>
<feature type="modified residue" description="Pyrrolidone carboxylic acid" evidence="1">
    <location>
        <position position="49"/>
    </location>
</feature>
<feature type="disulfide bond" evidence="1">
    <location>
        <begin position="50"/>
        <end position="65"/>
    </location>
</feature>
<feature type="disulfide bond" evidence="1">
    <location>
        <begin position="57"/>
        <end position="68"/>
    </location>
</feature>
<feature type="disulfide bond" evidence="1">
    <location>
        <begin position="64"/>
        <end position="73"/>
    </location>
</feature>
<sequence>MKLTCVLIVAVLFLTACQLIAADDSRDLQKFPRRKMRDGMLNTKNTKRQCLPPLHWCNMVDDECCHFCVLLACV</sequence>
<comment type="subcellular location">
    <subcellularLocation>
        <location evidence="1">Secreted</location>
    </subcellularLocation>
</comment>
<comment type="tissue specificity">
    <text>Expressed by the venom duct.</text>
</comment>
<comment type="domain">
    <text evidence="1">The presence of a 'disulfide through disulfide knot' structurally defines this protein as a knottin.</text>
</comment>
<comment type="domain">
    <text>The cysteine framework is VI/VII (C-C-CC-C-C).</text>
</comment>
<comment type="similarity">
    <text evidence="3">Belongs to the conotoxin O1 superfamily.</text>
</comment>